<feature type="chain" id="PRO_0000109151" description="UDP-N-acetylglucosamine--N-acetylmuramyl-(pentapeptide) pyrophosphoryl-undecaprenol N-acetylglucosamine transferase">
    <location>
        <begin position="1"/>
        <end position="379"/>
    </location>
</feature>
<feature type="binding site" evidence="1">
    <location>
        <begin position="17"/>
        <end position="19"/>
    </location>
    <ligand>
        <name>UDP-N-acetyl-alpha-D-glucosamine</name>
        <dbReference type="ChEBI" id="CHEBI:57705"/>
    </ligand>
</feature>
<feature type="binding site" evidence="1">
    <location>
        <position position="128"/>
    </location>
    <ligand>
        <name>UDP-N-acetyl-alpha-D-glucosamine</name>
        <dbReference type="ChEBI" id="CHEBI:57705"/>
    </ligand>
</feature>
<feature type="binding site" evidence="1">
    <location>
        <position position="169"/>
    </location>
    <ligand>
        <name>UDP-N-acetyl-alpha-D-glucosamine</name>
        <dbReference type="ChEBI" id="CHEBI:57705"/>
    </ligand>
</feature>
<feature type="binding site" evidence="1">
    <location>
        <position position="197"/>
    </location>
    <ligand>
        <name>UDP-N-acetyl-alpha-D-glucosamine</name>
        <dbReference type="ChEBI" id="CHEBI:57705"/>
    </ligand>
</feature>
<feature type="binding site" evidence="1">
    <location>
        <position position="298"/>
    </location>
    <ligand>
        <name>UDP-N-acetyl-alpha-D-glucosamine</name>
        <dbReference type="ChEBI" id="CHEBI:57705"/>
    </ligand>
</feature>
<gene>
    <name evidence="1" type="primary">murG</name>
    <name type="ordered locus">BMEI0579</name>
</gene>
<accession>Q8YI66</accession>
<sequence>MDNLANQGVIVLAAGGTGGHLFPAEALAHELRARGWDVHLATDARAQRFVGAFAQDHVHVIRSATIAGRNPVALLKTFWSLWQGNLDSRKLFRRLKPKLVVGFGGYPTLPPLYAASNMGIPTLIHEQNAVMGRANKGLAGRVKAIAGGFLPENSGAYAAKTVITGNPVRSPVLVAAATPYTPAGKDDRFRLLVFGGSQGAQFFSQAIPAAVALLPEHERARLLITQQARKEDEASARQAYEKLGVPADVAPFFNDMPARMADAHFVIARSGASTVSEITVIGRPAMLVPFPHALDHDQAANAAALAAAGGAEVVRQADLSPQRLAEMLQSAMNELERLEQQAKAAKSVGKPDAARLLADLAEAIASGKTVQEFKEGNRP</sequence>
<evidence type="ECO:0000255" key="1">
    <source>
        <dbReference type="HAMAP-Rule" id="MF_00033"/>
    </source>
</evidence>
<evidence type="ECO:0000305" key="2"/>
<dbReference type="EC" id="2.4.1.227" evidence="1"/>
<dbReference type="EMBL" id="AE008917">
    <property type="protein sequence ID" value="AAL51760.1"/>
    <property type="status" value="ALT_INIT"/>
    <property type="molecule type" value="Genomic_DNA"/>
</dbReference>
<dbReference type="PIR" id="AE3324">
    <property type="entry name" value="AE3324"/>
</dbReference>
<dbReference type="RefSeq" id="WP_004684021.1">
    <property type="nucleotide sequence ID" value="NZ_GG703780.1"/>
</dbReference>
<dbReference type="SMR" id="Q8YI66"/>
<dbReference type="CAZy" id="GT28">
    <property type="family name" value="Glycosyltransferase Family 28"/>
</dbReference>
<dbReference type="GeneID" id="29593363"/>
<dbReference type="KEGG" id="bme:BMEI0579"/>
<dbReference type="KEGG" id="bmel:DK63_847"/>
<dbReference type="PATRIC" id="fig|224914.52.peg.890"/>
<dbReference type="eggNOG" id="COG0707">
    <property type="taxonomic scope" value="Bacteria"/>
</dbReference>
<dbReference type="PhylomeDB" id="Q8YI66"/>
<dbReference type="UniPathway" id="UPA00219"/>
<dbReference type="Proteomes" id="UP000000419">
    <property type="component" value="Chromosome I"/>
</dbReference>
<dbReference type="GO" id="GO:0005886">
    <property type="term" value="C:plasma membrane"/>
    <property type="evidence" value="ECO:0007669"/>
    <property type="project" value="UniProtKB-SubCell"/>
</dbReference>
<dbReference type="GO" id="GO:0051991">
    <property type="term" value="F:UDP-N-acetyl-D-glucosamine:N-acetylmuramoyl-L-alanyl-D-glutamyl-meso-2,6-diaminopimelyl-D-alanyl-D-alanine-diphosphoundecaprenol 4-beta-N-acetylglucosaminlytransferase activity"/>
    <property type="evidence" value="ECO:0007669"/>
    <property type="project" value="RHEA"/>
</dbReference>
<dbReference type="GO" id="GO:0050511">
    <property type="term" value="F:undecaprenyldiphospho-muramoylpentapeptide beta-N-acetylglucosaminyltransferase activity"/>
    <property type="evidence" value="ECO:0007669"/>
    <property type="project" value="UniProtKB-UniRule"/>
</dbReference>
<dbReference type="GO" id="GO:0005975">
    <property type="term" value="P:carbohydrate metabolic process"/>
    <property type="evidence" value="ECO:0007669"/>
    <property type="project" value="InterPro"/>
</dbReference>
<dbReference type="GO" id="GO:0051301">
    <property type="term" value="P:cell division"/>
    <property type="evidence" value="ECO:0007669"/>
    <property type="project" value="UniProtKB-KW"/>
</dbReference>
<dbReference type="GO" id="GO:0071555">
    <property type="term" value="P:cell wall organization"/>
    <property type="evidence" value="ECO:0007669"/>
    <property type="project" value="UniProtKB-KW"/>
</dbReference>
<dbReference type="GO" id="GO:0030259">
    <property type="term" value="P:lipid glycosylation"/>
    <property type="evidence" value="ECO:0007669"/>
    <property type="project" value="UniProtKB-UniRule"/>
</dbReference>
<dbReference type="GO" id="GO:0009252">
    <property type="term" value="P:peptidoglycan biosynthetic process"/>
    <property type="evidence" value="ECO:0007669"/>
    <property type="project" value="UniProtKB-UniRule"/>
</dbReference>
<dbReference type="GO" id="GO:0008360">
    <property type="term" value="P:regulation of cell shape"/>
    <property type="evidence" value="ECO:0007669"/>
    <property type="project" value="UniProtKB-KW"/>
</dbReference>
<dbReference type="CDD" id="cd03785">
    <property type="entry name" value="GT28_MurG"/>
    <property type="match status" value="1"/>
</dbReference>
<dbReference type="Gene3D" id="3.40.50.2000">
    <property type="entry name" value="Glycogen Phosphorylase B"/>
    <property type="match status" value="2"/>
</dbReference>
<dbReference type="HAMAP" id="MF_00033">
    <property type="entry name" value="MurG"/>
    <property type="match status" value="1"/>
</dbReference>
<dbReference type="InterPro" id="IPR006009">
    <property type="entry name" value="GlcNAc_MurG"/>
</dbReference>
<dbReference type="InterPro" id="IPR007235">
    <property type="entry name" value="Glyco_trans_28_C"/>
</dbReference>
<dbReference type="InterPro" id="IPR004276">
    <property type="entry name" value="GlycoTrans_28_N"/>
</dbReference>
<dbReference type="NCBIfam" id="TIGR01133">
    <property type="entry name" value="murG"/>
    <property type="match status" value="1"/>
</dbReference>
<dbReference type="PANTHER" id="PTHR21015:SF22">
    <property type="entry name" value="GLYCOSYLTRANSFERASE"/>
    <property type="match status" value="1"/>
</dbReference>
<dbReference type="PANTHER" id="PTHR21015">
    <property type="entry name" value="UDP-N-ACETYLGLUCOSAMINE--N-ACETYLMURAMYL-(PENTAPEPTIDE) PYROPHOSPHORYL-UNDECAPRENOL N-ACETYLGLUCOSAMINE TRANSFERASE 1"/>
    <property type="match status" value="1"/>
</dbReference>
<dbReference type="Pfam" id="PF04101">
    <property type="entry name" value="Glyco_tran_28_C"/>
    <property type="match status" value="1"/>
</dbReference>
<dbReference type="Pfam" id="PF03033">
    <property type="entry name" value="Glyco_transf_28"/>
    <property type="match status" value="1"/>
</dbReference>
<dbReference type="SUPFAM" id="SSF53756">
    <property type="entry name" value="UDP-Glycosyltransferase/glycogen phosphorylase"/>
    <property type="match status" value="1"/>
</dbReference>
<keyword id="KW-0131">Cell cycle</keyword>
<keyword id="KW-0132">Cell division</keyword>
<keyword id="KW-0997">Cell inner membrane</keyword>
<keyword id="KW-1003">Cell membrane</keyword>
<keyword id="KW-0133">Cell shape</keyword>
<keyword id="KW-0961">Cell wall biogenesis/degradation</keyword>
<keyword id="KW-0328">Glycosyltransferase</keyword>
<keyword id="KW-0472">Membrane</keyword>
<keyword id="KW-0573">Peptidoglycan synthesis</keyword>
<keyword id="KW-0808">Transferase</keyword>
<protein>
    <recommendedName>
        <fullName evidence="1">UDP-N-acetylglucosamine--N-acetylmuramyl-(pentapeptide) pyrophosphoryl-undecaprenol N-acetylglucosamine transferase</fullName>
        <ecNumber evidence="1">2.4.1.227</ecNumber>
    </recommendedName>
    <alternativeName>
        <fullName evidence="1">Undecaprenyl-PP-MurNAc-pentapeptide-UDPGlcNAc GlcNAc transferase</fullName>
    </alternativeName>
</protein>
<proteinExistence type="inferred from homology"/>
<name>MURG_BRUME</name>
<comment type="function">
    <text evidence="1">Cell wall formation. Catalyzes the transfer of a GlcNAc subunit on undecaprenyl-pyrophosphoryl-MurNAc-pentapeptide (lipid intermediate I) to form undecaprenyl-pyrophosphoryl-MurNAc-(pentapeptide)GlcNAc (lipid intermediate II).</text>
</comment>
<comment type="catalytic activity">
    <reaction evidence="1">
        <text>di-trans,octa-cis-undecaprenyl diphospho-N-acetyl-alpha-D-muramoyl-L-alanyl-D-glutamyl-meso-2,6-diaminopimeloyl-D-alanyl-D-alanine + UDP-N-acetyl-alpha-D-glucosamine = di-trans,octa-cis-undecaprenyl diphospho-[N-acetyl-alpha-D-glucosaminyl-(1-&gt;4)]-N-acetyl-alpha-D-muramoyl-L-alanyl-D-glutamyl-meso-2,6-diaminopimeloyl-D-alanyl-D-alanine + UDP + H(+)</text>
        <dbReference type="Rhea" id="RHEA:31227"/>
        <dbReference type="ChEBI" id="CHEBI:15378"/>
        <dbReference type="ChEBI" id="CHEBI:57705"/>
        <dbReference type="ChEBI" id="CHEBI:58223"/>
        <dbReference type="ChEBI" id="CHEBI:61387"/>
        <dbReference type="ChEBI" id="CHEBI:61388"/>
        <dbReference type="EC" id="2.4.1.227"/>
    </reaction>
</comment>
<comment type="pathway">
    <text evidence="1">Cell wall biogenesis; peptidoglycan biosynthesis.</text>
</comment>
<comment type="subcellular location">
    <subcellularLocation>
        <location evidence="1">Cell inner membrane</location>
        <topology evidence="1">Peripheral membrane protein</topology>
        <orientation evidence="1">Cytoplasmic side</orientation>
    </subcellularLocation>
</comment>
<comment type="similarity">
    <text evidence="1">Belongs to the glycosyltransferase 28 family. MurG subfamily.</text>
</comment>
<comment type="sequence caution" evidence="2">
    <conflict type="erroneous initiation">
        <sequence resource="EMBL-CDS" id="AAL51760"/>
    </conflict>
</comment>
<organism>
    <name type="scientific">Brucella melitensis biotype 1 (strain ATCC 23456 / CCUG 17765 / NCTC 10094 / 16M)</name>
    <dbReference type="NCBI Taxonomy" id="224914"/>
    <lineage>
        <taxon>Bacteria</taxon>
        <taxon>Pseudomonadati</taxon>
        <taxon>Pseudomonadota</taxon>
        <taxon>Alphaproteobacteria</taxon>
        <taxon>Hyphomicrobiales</taxon>
        <taxon>Brucellaceae</taxon>
        <taxon>Brucella/Ochrobactrum group</taxon>
        <taxon>Brucella</taxon>
    </lineage>
</organism>
<reference key="1">
    <citation type="journal article" date="2002" name="Proc. Natl. Acad. Sci. U.S.A.">
        <title>The genome sequence of the facultative intracellular pathogen Brucella melitensis.</title>
        <authorList>
            <person name="DelVecchio V.G."/>
            <person name="Kapatral V."/>
            <person name="Redkar R.J."/>
            <person name="Patra G."/>
            <person name="Mujer C."/>
            <person name="Los T."/>
            <person name="Ivanova N."/>
            <person name="Anderson I."/>
            <person name="Bhattacharyya A."/>
            <person name="Lykidis A."/>
            <person name="Reznik G."/>
            <person name="Jablonski L."/>
            <person name="Larsen N."/>
            <person name="D'Souza M."/>
            <person name="Bernal A."/>
            <person name="Mazur M."/>
            <person name="Goltsman E."/>
            <person name="Selkov E."/>
            <person name="Elzer P.H."/>
            <person name="Hagius S."/>
            <person name="O'Callaghan D."/>
            <person name="Letesson J.-J."/>
            <person name="Haselkorn R."/>
            <person name="Kyrpides N.C."/>
            <person name="Overbeek R."/>
        </authorList>
    </citation>
    <scope>NUCLEOTIDE SEQUENCE [LARGE SCALE GENOMIC DNA]</scope>
    <source>
        <strain>ATCC 23456 / CCUG 17765 / NCTC 10094 / 16M</strain>
    </source>
</reference>